<feature type="signal peptide" evidence="1">
    <location>
        <begin position="1"/>
        <end position="23"/>
    </location>
</feature>
<feature type="chain" id="PRO_0000012297" description="Glypican-1">
    <location>
        <begin position="24"/>
        <end position="529"/>
    </location>
</feature>
<feature type="chain" id="PRO_0000333838" description="Secreted glypican-1">
    <location>
        <begin position="24"/>
        <end status="unknown"/>
    </location>
</feature>
<feature type="propeptide" id="PRO_0000012298" description="Removed in mature form" evidence="2">
    <location>
        <begin position="530"/>
        <end position="557"/>
    </location>
</feature>
<feature type="region of interest" description="Disordered" evidence="3">
    <location>
        <begin position="477"/>
        <end position="531"/>
    </location>
</feature>
<feature type="lipid moiety-binding region" description="GPI-anchor amidated serine" evidence="2">
    <location>
        <position position="529"/>
    </location>
</feature>
<feature type="glycosylation site" description="N-linked (GlcNAc...) asparagine" evidence="8">
    <location>
        <position position="79"/>
    </location>
</feature>
<feature type="glycosylation site" description="N-linked (GlcNAc...) asparagine" evidence="8">
    <location>
        <position position="116"/>
    </location>
</feature>
<feature type="glycosylation site" description="O-linked (Xyl...) (heparan sulfate) serine" evidence="2">
    <location>
        <position position="485"/>
    </location>
</feature>
<feature type="glycosylation site" description="O-linked (Xyl...) (heparan sulfate) serine" evidence="2">
    <location>
        <position position="487"/>
    </location>
</feature>
<feature type="glycosylation site" description="O-linked (Xyl...) (heparan sulfate) serine" evidence="2">
    <location>
        <position position="489"/>
    </location>
</feature>
<feature type="disulfide bond" evidence="1">
    <location>
        <begin position="32"/>
        <end position="68"/>
    </location>
</feature>
<feature type="disulfide bond" evidence="1">
    <location>
        <begin position="62"/>
        <end position="255"/>
    </location>
</feature>
<feature type="disulfide bond" evidence="1">
    <location>
        <begin position="69"/>
        <end position="258"/>
    </location>
</feature>
<feature type="disulfide bond" evidence="1">
    <location>
        <begin position="190"/>
        <end position="342"/>
    </location>
</feature>
<feature type="disulfide bond" evidence="1">
    <location>
        <begin position="245"/>
        <end position="278"/>
    </location>
</feature>
<feature type="disulfide bond" evidence="1">
    <location>
        <begin position="267"/>
        <end position="414"/>
    </location>
</feature>
<feature type="disulfide bond" evidence="1">
    <location>
        <begin position="271"/>
        <end position="400"/>
    </location>
</feature>
<accession>Q9QZF2</accession>
<protein>
    <recommendedName>
        <fullName>Glypican-1</fullName>
    </recommendedName>
    <component>
        <recommendedName>
            <fullName>Secreted glypican-1</fullName>
        </recommendedName>
    </component>
</protein>
<proteinExistence type="evidence at protein level"/>
<keyword id="KW-1003">Cell membrane</keyword>
<keyword id="KW-0186">Copper</keyword>
<keyword id="KW-1015">Disulfide bond</keyword>
<keyword id="KW-0967">Endosome</keyword>
<keyword id="KW-0325">Glycoprotein</keyword>
<keyword id="KW-0336">GPI-anchor</keyword>
<keyword id="KW-0357">Heparan sulfate</keyword>
<keyword id="KW-0449">Lipoprotein</keyword>
<keyword id="KW-0472">Membrane</keyword>
<keyword id="KW-0654">Proteoglycan</keyword>
<keyword id="KW-1185">Reference proteome</keyword>
<keyword id="KW-0702">S-nitrosylation</keyword>
<keyword id="KW-0964">Secreted</keyword>
<keyword id="KW-0732">Signal</keyword>
<keyword id="KW-0862">Zinc</keyword>
<gene>
    <name type="primary">Gpc1</name>
</gene>
<name>GPC1_MOUSE</name>
<comment type="function">
    <text evidence="1 9 10 11 12">Cell surface proteoglycan that bears heparan sulfate. Binds, via the heparan sulfate side chains, alpha-4 (V) collagen and participates in Schwann cell myelination (By similarity). May act as a catalyst in increasing the rate of conversion of prion protein PRPN(C) to PRNP(Sc) via associating (via the heparan sulfate side chains) with both forms of PRPN, targeting them to lipid rafts and facilitating their interaction. Required for proper skeletal muscle differentiation by sequestering FGF2 in lipid rafts preventing its binding to receptors (FGFRs) and inhibiting the FGF-mediated signaling. Binds Cu(2+) or Zn(2+) ions.</text>
</comment>
<comment type="subcellular location">
    <subcellularLocation>
        <location>Cell membrane</location>
        <topology>Lipid-anchor</topology>
        <topology>GPI-anchor</topology>
        <orientation>Extracellular side</orientation>
    </subcellularLocation>
    <subcellularLocation>
        <location>Endosome</location>
    </subcellularLocation>
    <text>S-nitrosylated form recycled in endosomes. Localizes to CAV1-containing vesicles close to the cell surface. Cleavage of heparan sulfate side chains takes place mainly in late endosomes. Associates with both forms of PRNP in lipid rafts. Colocalizes with APP in perinuclear compartments and with CP in intracellular compartments. Associates with fibrillar APP amyloid-beta peptides in lipid rafts in Alzheimer disease brains.</text>
</comment>
<comment type="subcellular location">
    <molecule>Secreted glypican-1</molecule>
    <subcellularLocation>
        <location>Secreted</location>
        <location>Extracellular space</location>
    </subcellularLocation>
</comment>
<comment type="PTM">
    <text evidence="5">S-nitrosylated in a Cu(2+)-dependent manner. Nitric acid (NO) is released from the nitrosylated cysteines by ascorbate or by some other reducing agent, in a Cu(2+) or Zn(2+) dependent manner. This free nitric oxide is then capable of cleaving the heparan sulfate side chains.</text>
</comment>
<comment type="PTM">
    <text evidence="4 5 6 7 8">N- and O-glycosylated. N-glycosylation is mainly of the complex type containing sialic acid. O-glycosylated with heparan sulfate. The heparan sulfate chains can be cleaved either by the action of heparanase or, degraded by a deaminative process that uses nitric oxide (NO) released from the S-nitrosylated cysteines. This process is triggered by ascorbate, or by some other reducing agent, in a Cu(2+)- or Zn(2+) dependent manner. Cu(2+) ions are provided by ceruloproteins such as APP, PRNP or CP which associate with GCP1 in intracellular compartments or lipid rafts.</text>
</comment>
<comment type="PTM">
    <text evidence="1">This cell-associated glypican is further processed to give rise to a medium-released species.</text>
</comment>
<comment type="disruption phenotype">
    <text evidence="9 12">Null mice with induced pancreatic ductal adenocarcinomas (PDACs) exhibit attenuated pancreatic tumor growth and invasiveness, decreased cancer cell proliferation and mitogen-activated protein kinase activation. Pancreatic cancer cells isolated from the tumors of GPC1 (-/-) mice were not as invasive in response to fibroblast growth factor-2 (FGF-2) as cancer cells isolated from wild-type mice.</text>
</comment>
<comment type="similarity">
    <text evidence="13">Belongs to the glypican family.</text>
</comment>
<organism>
    <name type="scientific">Mus musculus</name>
    <name type="common">Mouse</name>
    <dbReference type="NCBI Taxonomy" id="10090"/>
    <lineage>
        <taxon>Eukaryota</taxon>
        <taxon>Metazoa</taxon>
        <taxon>Chordata</taxon>
        <taxon>Craniata</taxon>
        <taxon>Vertebrata</taxon>
        <taxon>Euteleostomi</taxon>
        <taxon>Mammalia</taxon>
        <taxon>Eutheria</taxon>
        <taxon>Euarchontoglires</taxon>
        <taxon>Glires</taxon>
        <taxon>Rodentia</taxon>
        <taxon>Myomorpha</taxon>
        <taxon>Muroidea</taxon>
        <taxon>Muridae</taxon>
        <taxon>Murinae</taxon>
        <taxon>Mus</taxon>
        <taxon>Mus</taxon>
    </lineage>
</organism>
<evidence type="ECO:0000250" key="1"/>
<evidence type="ECO:0000255" key="2"/>
<evidence type="ECO:0000256" key="3">
    <source>
        <dbReference type="SAM" id="MobiDB-lite"/>
    </source>
</evidence>
<evidence type="ECO:0000269" key="4">
    <source>
    </source>
</evidence>
<evidence type="ECO:0000269" key="5">
    <source>
    </source>
</evidence>
<evidence type="ECO:0000269" key="6">
    <source>
    </source>
</evidence>
<evidence type="ECO:0000269" key="7">
    <source>
    </source>
</evidence>
<evidence type="ECO:0000269" key="8">
    <source>
    </source>
</evidence>
<evidence type="ECO:0000269" key="9">
    <source>
    </source>
</evidence>
<evidence type="ECO:0000269" key="10">
    <source>
    </source>
</evidence>
<evidence type="ECO:0000269" key="11">
    <source>
    </source>
</evidence>
<evidence type="ECO:0000269" key="12">
    <source>
    </source>
</evidence>
<evidence type="ECO:0000305" key="13"/>
<dbReference type="EMBL" id="AF185613">
    <property type="protein sequence ID" value="AAD56243.1"/>
    <property type="molecule type" value="mRNA"/>
</dbReference>
<dbReference type="EMBL" id="BC062902">
    <property type="protein sequence ID" value="AAH62902.1"/>
    <property type="molecule type" value="mRNA"/>
</dbReference>
<dbReference type="CCDS" id="CCDS15177.1"/>
<dbReference type="RefSeq" id="NP_057905.1">
    <property type="nucleotide sequence ID" value="NM_016696.5"/>
</dbReference>
<dbReference type="SMR" id="Q9QZF2"/>
<dbReference type="BioGRID" id="200012">
    <property type="interactions" value="6"/>
</dbReference>
<dbReference type="FunCoup" id="Q9QZF2">
    <property type="interactions" value="882"/>
</dbReference>
<dbReference type="IntAct" id="Q9QZF2">
    <property type="interactions" value="1"/>
</dbReference>
<dbReference type="MINT" id="Q9QZF2"/>
<dbReference type="STRING" id="10090.ENSMUSP00000047199"/>
<dbReference type="GlyCosmos" id="Q9QZF2">
    <property type="glycosylation" value="5 sites, No reported glycans"/>
</dbReference>
<dbReference type="GlyGen" id="Q9QZF2">
    <property type="glycosylation" value="6 sites, 2 N-linked glycans (2 sites), 1 O-linked glycan (1 site)"/>
</dbReference>
<dbReference type="iPTMnet" id="Q9QZF2"/>
<dbReference type="PhosphoSitePlus" id="Q9QZF2"/>
<dbReference type="SwissPalm" id="Q9QZF2"/>
<dbReference type="jPOST" id="Q9QZF2"/>
<dbReference type="PaxDb" id="10090-ENSMUSP00000047199"/>
<dbReference type="ProteomicsDB" id="271314"/>
<dbReference type="Pumba" id="Q9QZF2"/>
<dbReference type="Antibodypedia" id="34516">
    <property type="antibodies" value="370 antibodies from 36 providers"/>
</dbReference>
<dbReference type="DNASU" id="14733"/>
<dbReference type="Ensembl" id="ENSMUST00000045970.8">
    <property type="protein sequence ID" value="ENSMUSP00000047199.7"/>
    <property type="gene ID" value="ENSMUSG00000034220.8"/>
</dbReference>
<dbReference type="GeneID" id="14733"/>
<dbReference type="KEGG" id="mmu:14733"/>
<dbReference type="UCSC" id="uc007cbs.1">
    <property type="organism name" value="mouse"/>
</dbReference>
<dbReference type="AGR" id="MGI:1194891"/>
<dbReference type="CTD" id="2817"/>
<dbReference type="MGI" id="MGI:1194891">
    <property type="gene designation" value="Gpc1"/>
</dbReference>
<dbReference type="VEuPathDB" id="HostDB:ENSMUSG00000034220"/>
<dbReference type="eggNOG" id="KOG3821">
    <property type="taxonomic scope" value="Eukaryota"/>
</dbReference>
<dbReference type="GeneTree" id="ENSGT01050000244897"/>
<dbReference type="HOGENOM" id="CLU_024658_2_0_1"/>
<dbReference type="InParanoid" id="Q9QZF2"/>
<dbReference type="OMA" id="CNSYCRN"/>
<dbReference type="OrthoDB" id="10010764at2759"/>
<dbReference type="PhylomeDB" id="Q9QZF2"/>
<dbReference type="TreeFam" id="TF105317"/>
<dbReference type="Reactome" id="R-MMU-1971475">
    <property type="pathway name" value="A tetrasaccharide linker sequence is required for GAG synthesis"/>
</dbReference>
<dbReference type="Reactome" id="R-MMU-2022928">
    <property type="pathway name" value="HS-GAG biosynthesis"/>
</dbReference>
<dbReference type="Reactome" id="R-MMU-2024096">
    <property type="pathway name" value="HS-GAG degradation"/>
</dbReference>
<dbReference type="Reactome" id="R-MMU-202733">
    <property type="pathway name" value="Cell surface interactions at the vascular wall"/>
</dbReference>
<dbReference type="Reactome" id="R-MMU-376176">
    <property type="pathway name" value="Signaling by ROBO receptors"/>
</dbReference>
<dbReference type="Reactome" id="R-MMU-975634">
    <property type="pathway name" value="Retinoid metabolism and transport"/>
</dbReference>
<dbReference type="BioGRID-ORCS" id="14733">
    <property type="hits" value="1 hit in 76 CRISPR screens"/>
</dbReference>
<dbReference type="CD-CODE" id="CE726F99">
    <property type="entry name" value="Postsynaptic density"/>
</dbReference>
<dbReference type="ChiTaRS" id="Gpc1">
    <property type="organism name" value="mouse"/>
</dbReference>
<dbReference type="PRO" id="PR:Q9QZF2"/>
<dbReference type="Proteomes" id="UP000000589">
    <property type="component" value="Chromosome 1"/>
</dbReference>
<dbReference type="RNAct" id="Q9QZF2">
    <property type="molecule type" value="protein"/>
</dbReference>
<dbReference type="Bgee" id="ENSMUSG00000034220">
    <property type="expression patterns" value="Expressed in vault of skull and 310 other cell types or tissues"/>
</dbReference>
<dbReference type="ExpressionAtlas" id="Q9QZF2">
    <property type="expression patterns" value="baseline and differential"/>
</dbReference>
<dbReference type="GO" id="GO:0005829">
    <property type="term" value="C:cytosol"/>
    <property type="evidence" value="ECO:0007669"/>
    <property type="project" value="Ensembl"/>
</dbReference>
<dbReference type="GO" id="GO:0005768">
    <property type="term" value="C:endosome"/>
    <property type="evidence" value="ECO:0007669"/>
    <property type="project" value="UniProtKB-SubCell"/>
</dbReference>
<dbReference type="GO" id="GO:0031012">
    <property type="term" value="C:extracellular matrix"/>
    <property type="evidence" value="ECO:0000314"/>
    <property type="project" value="UniProtKB"/>
</dbReference>
<dbReference type="GO" id="GO:0005576">
    <property type="term" value="C:extracellular region"/>
    <property type="evidence" value="ECO:0007669"/>
    <property type="project" value="UniProtKB-SubCell"/>
</dbReference>
<dbReference type="GO" id="GO:0005796">
    <property type="term" value="C:Golgi lumen"/>
    <property type="evidence" value="ECO:0000304"/>
    <property type="project" value="Reactome"/>
</dbReference>
<dbReference type="GO" id="GO:0045121">
    <property type="term" value="C:membrane raft"/>
    <property type="evidence" value="ECO:0000314"/>
    <property type="project" value="UniProtKB"/>
</dbReference>
<dbReference type="GO" id="GO:0005654">
    <property type="term" value="C:nucleoplasm"/>
    <property type="evidence" value="ECO:0007669"/>
    <property type="project" value="Ensembl"/>
</dbReference>
<dbReference type="GO" id="GO:0005886">
    <property type="term" value="C:plasma membrane"/>
    <property type="evidence" value="ECO:0007669"/>
    <property type="project" value="UniProtKB-SubCell"/>
</dbReference>
<dbReference type="GO" id="GO:0098552">
    <property type="term" value="C:side of membrane"/>
    <property type="evidence" value="ECO:0007669"/>
    <property type="project" value="UniProtKB-KW"/>
</dbReference>
<dbReference type="GO" id="GO:0045202">
    <property type="term" value="C:synapse"/>
    <property type="evidence" value="ECO:0000314"/>
    <property type="project" value="SynGO"/>
</dbReference>
<dbReference type="GO" id="GO:0005507">
    <property type="term" value="F:copper ion binding"/>
    <property type="evidence" value="ECO:0000250"/>
    <property type="project" value="UniProtKB"/>
</dbReference>
<dbReference type="GO" id="GO:0017134">
    <property type="term" value="F:fibroblast growth factor binding"/>
    <property type="evidence" value="ECO:0000314"/>
    <property type="project" value="UniProtKB"/>
</dbReference>
<dbReference type="GO" id="GO:0043236">
    <property type="term" value="F:laminin binding"/>
    <property type="evidence" value="ECO:0000314"/>
    <property type="project" value="UniProtKB"/>
</dbReference>
<dbReference type="GO" id="GO:0030200">
    <property type="term" value="P:heparan sulfate proteoglycan catabolic process"/>
    <property type="evidence" value="ECO:0000250"/>
    <property type="project" value="UniProtKB"/>
</dbReference>
<dbReference type="GO" id="GO:0032288">
    <property type="term" value="P:myelin assembly"/>
    <property type="evidence" value="ECO:0000250"/>
    <property type="project" value="UniProtKB"/>
</dbReference>
<dbReference type="GO" id="GO:0040037">
    <property type="term" value="P:negative regulation of fibroblast growth factor receptor signaling pathway"/>
    <property type="evidence" value="ECO:0000314"/>
    <property type="project" value="UniProtKB"/>
</dbReference>
<dbReference type="GO" id="GO:2001016">
    <property type="term" value="P:positive regulation of skeletal muscle cell differentiation"/>
    <property type="evidence" value="ECO:0000270"/>
    <property type="project" value="UniProtKB"/>
</dbReference>
<dbReference type="GO" id="GO:0014037">
    <property type="term" value="P:Schwann cell differentiation"/>
    <property type="evidence" value="ECO:0000250"/>
    <property type="project" value="UniProtKB"/>
</dbReference>
<dbReference type="InterPro" id="IPR001863">
    <property type="entry name" value="Glypican"/>
</dbReference>
<dbReference type="InterPro" id="IPR019803">
    <property type="entry name" value="Glypican_CS"/>
</dbReference>
<dbReference type="PANTHER" id="PTHR10822">
    <property type="entry name" value="GLYPICAN"/>
    <property type="match status" value="1"/>
</dbReference>
<dbReference type="PANTHER" id="PTHR10822:SF8">
    <property type="entry name" value="GLYPICAN-1"/>
    <property type="match status" value="1"/>
</dbReference>
<dbReference type="Pfam" id="PF01153">
    <property type="entry name" value="Glypican"/>
    <property type="match status" value="1"/>
</dbReference>
<dbReference type="PROSITE" id="PS01207">
    <property type="entry name" value="GLYPICAN"/>
    <property type="match status" value="1"/>
</dbReference>
<reference key="1">
    <citation type="journal article" date="2001" name="Cytogenet. Cell Genet.">
        <title>Mapping of the rat glypican genes.</title>
        <authorList>
            <person name="Szpirer C."/>
            <person name="Szpirer J."/>
            <person name="Riviere M."/>
            <person name="Van Vooren P."/>
            <person name="Veugelers M."/>
            <person name="David G."/>
        </authorList>
    </citation>
    <scope>NUCLEOTIDE SEQUENCE [MRNA]</scope>
</reference>
<reference key="2">
    <citation type="journal article" date="2004" name="Genome Res.">
        <title>The status, quality, and expansion of the NIH full-length cDNA project: the Mammalian Gene Collection (MGC).</title>
        <authorList>
            <consortium name="The MGC Project Team"/>
        </authorList>
    </citation>
    <scope>NUCLEOTIDE SEQUENCE [LARGE SCALE MRNA]</scope>
    <source>
        <strain>C57BL/6J</strain>
        <tissue>Brain</tissue>
    </source>
</reference>
<reference key="3">
    <citation type="journal article" date="2003" name="J. Biol. Chem.">
        <title>Prion, amyloid beta-derived Cu(II) ions, or free Zn(II) ions support S-nitroso-dependent autocleavage of glypican-1 heparan sulfate.</title>
        <authorList>
            <person name="Mani K."/>
            <person name="Cheng F."/>
            <person name="Havsmark B."/>
            <person name="Jonsson M."/>
            <person name="Belting M."/>
            <person name="Fransson L.A."/>
        </authorList>
    </citation>
    <scope>COPPER-BINDING</scope>
    <scope>SUBCELLULAR LOCATION</scope>
    <scope>GLYCOSYLATION</scope>
</reference>
<reference key="4">
    <citation type="journal article" date="2005" name="J. Biol. Chem.">
        <title>The amyloid precursor protein (APP) of Alzheimer disease and its paralog, APLP2, modulate the Cu/Zn-nitric oxide-catalyzed degradation of glypican-1 heparan sulfate in vivo.</title>
        <authorList>
            <person name="Cappai R."/>
            <person name="Cheng F."/>
            <person name="Ciccotosto G.D."/>
            <person name="Needham B.E."/>
            <person name="Masters C.L."/>
            <person name="Multhaup G."/>
            <person name="Fransson L.A."/>
            <person name="Mani K."/>
        </authorList>
    </citation>
    <scope>SUBCELLULAR LOCATION</scope>
    <scope>COPPER-BINDING</scope>
    <scope>ZINC-BINDING</scope>
    <scope>S-NITROSYLATION</scope>
    <scope>GLYCOSYLATION</scope>
</reference>
<reference key="5">
    <citation type="journal article" date="2006" name="Glycobiology">
        <title>Constitutive and vitamin C-induced, NO-catalyzed release of heparan sulfate from recycling glypican-1 in late endosomes.</title>
        <authorList>
            <person name="Mani K."/>
            <person name="Cheng F."/>
            <person name="Fransson L.A."/>
        </authorList>
    </citation>
    <scope>SUBCELLULAR LOCATION</scope>
    <scope>GLYCOSYLATION</scope>
</reference>
<reference key="6">
    <citation type="journal article" date="2006" name="J. Neurochem.">
        <title>Copper-dependent co-internalization of the prion protein and glypican-1.</title>
        <authorList>
            <person name="Cheng F."/>
            <person name="Lindqvist J."/>
            <person name="Haigh C.L."/>
            <person name="Brown D.R."/>
            <person name="Mani K."/>
        </authorList>
    </citation>
    <scope>SUBCELLULAR LOCATION</scope>
</reference>
<reference key="7">
    <citation type="journal article" date="2006" name="Mol. Cell. Proteomics">
        <title>Comprehensive identification of phosphorylation sites in postsynaptic density preparations.</title>
        <authorList>
            <person name="Trinidad J.C."/>
            <person name="Specht C.G."/>
            <person name="Thalhammer A."/>
            <person name="Schoepfer R."/>
            <person name="Burlingame A.L."/>
        </authorList>
    </citation>
    <scope>IDENTIFICATION BY MASS SPECTROMETRY [LARGE SCALE ANALYSIS]</scope>
    <source>
        <tissue>Brain</tissue>
    </source>
</reference>
<reference key="8">
    <citation type="journal article" date="2008" name="Eur. J. Neurosci.">
        <title>Involvement of glypican-1 autoprocessing in scrapie infection.</title>
        <authorList>
            <person name="Lofgren K."/>
            <person name="Cheng F."/>
            <person name="Fransson L.A."/>
            <person name="Bedecs K."/>
            <person name="Mani K."/>
        </authorList>
    </citation>
    <scope>GLYCOSYLATION</scope>
    <scope>ASSOCIATION WITH PRPN AND AN ANIMAL MODEL OF SCRAPIE DISEASE</scope>
</reference>
<reference key="9">
    <citation type="journal article" date="2009" name="Mol. Cell. Proteomics">
        <title>The mouse C2C12 myoblast cell surface N-linked glycoproteome: identification, glycosite occupancy, and membrane orientation.</title>
        <authorList>
            <person name="Gundry R.L."/>
            <person name="Raginski K."/>
            <person name="Tarasova Y."/>
            <person name="Tchernyshyov I."/>
            <person name="Bausch-Fluck D."/>
            <person name="Elliott S.T."/>
            <person name="Boheler K.R."/>
            <person name="Van Eyk J.E."/>
            <person name="Wollscheid B."/>
        </authorList>
    </citation>
    <scope>GLYCOSYLATION [LARGE SCALE ANALYSIS] AT ASN-79 AND ASN-116</scope>
    <source>
        <tissue>Myoblast</tissue>
    </source>
</reference>
<reference key="10">
    <citation type="journal article" date="2009" name="Neural Dev.">
        <title>Glypican-1 controls brain size through regulation of fibroblast growth factor signaling in early neurogenesis.</title>
        <authorList>
            <person name="Jen Y.H."/>
            <person name="Musacchio M."/>
            <person name="Lander A.D."/>
        </authorList>
    </citation>
    <scope>DISRUPTION PHENOTYPE</scope>
    <scope>FUNCTION</scope>
</reference>
<reference key="11">
    <citation type="journal article" date="2009" name="PLoS Pathog.">
        <title>Glypican-1 mediates both prion protein lipid raft association and disease isoform formation.</title>
        <authorList>
            <person name="Taylor D.R."/>
            <person name="Whitehouse I.J."/>
            <person name="Hooper N.M."/>
        </authorList>
    </citation>
    <scope>FUNCTION</scope>
    <scope>SUBCELLULAR LOCATION</scope>
    <scope>ASSOCIATION WITH A MOUSE MODEL OF SCRAPIE DISEASE</scope>
</reference>
<reference key="12">
    <citation type="journal article" date="2010" name="Cell">
        <title>A tissue-specific atlas of mouse protein phosphorylation and expression.</title>
        <authorList>
            <person name="Huttlin E.L."/>
            <person name="Jedrychowski M.P."/>
            <person name="Elias J.E."/>
            <person name="Goswami T."/>
            <person name="Rad R."/>
            <person name="Beausoleil S.A."/>
            <person name="Villen J."/>
            <person name="Haas W."/>
            <person name="Sowa M.E."/>
            <person name="Gygi S.P."/>
        </authorList>
    </citation>
    <scope>IDENTIFICATION BY MASS SPECTROMETRY [LARGE SCALE ANALYSIS]</scope>
    <source>
        <tissue>Brain</tissue>
        <tissue>Heart</tissue>
    </source>
</reference>
<reference key="13">
    <citation type="journal article" date="2010" name="Mol. Cell. Biol.">
        <title>A novel mechanism of sequestering fibroblast growth factor 2 by glypican in lipid rafts, allowing skeletal muscle differentiation.</title>
        <authorList>
            <person name="Gutierrez J."/>
            <person name="Brandan E."/>
        </authorList>
    </citation>
    <scope>FUNCTION</scope>
    <scope>SUBCELLULAR LOCATION</scope>
</reference>
<reference key="14">
    <citation type="journal article" date="2012" name="Oncogene">
        <title>A Kras(G12D)-driven genetic mouse model of pancreatic cancer requires glypican-1 for efficient proliferation and angiogenesis.</title>
        <authorList>
            <person name="Whipple C.A."/>
            <person name="Young A.L."/>
            <person name="Korc M."/>
        </authorList>
    </citation>
    <scope>ASSOCIATION WITH PANCREATIC DUCTAL ADENOCARCINOMAS</scope>
    <scope>DISRUPTION PHENOTYPE</scope>
    <scope>FUNCTION</scope>
</reference>
<sequence length="557" mass="61360">MELRTRGWWLLCAAAALVVCARGDPASKSRSCSEVRQIYGAKGFSLSDVPQAEISGEHLRICPQGYTCCTSEMEENLANHSRMELESALHDSSRALQATLATQLHGIDDHFQRLLNDSERTLQEAFPGAFGDLYTQNTRAFRDLYAELRLYYRGANLHLEETLAEFWARLLERLFKQLHPQLLPDDYLDCLGKQAEALRPFGDAPRELRLRATRAFVAARSFVQGLGVASDVVRKVAQVPLAPECSRAIMKLVYCAHCRGVPGARPCPDYCRNVLKGCLANQADLDAEWRNLLDSMVLITDKFWGPSGAESVIGGVHVWLAEAINALQDNKDTLTAKVIQACGNPKVNPHGSGPEEKRRRGKLALQEKPSTGTLEKLVSEAKAQLRDIQDFWISLPGTLCSEKMAMSPASDDRCWNGISKGRYLPEVMGDGLANQINNPEVEVDITKPDMTIRQQIMQLKIMTNRLRGAYGGNDVDFQDASDDGSGSGSGGGCPDDTCGRRVSKKSSSSRTPLTHALPGLSEQEGQKTSAATCPEPHSFFLLFLVTLVLAAARPRWR</sequence>